<reference evidence="6" key="1">
    <citation type="journal article" date="2002" name="Nature">
        <title>The genome sequence of Schizosaccharomyces pombe.</title>
        <authorList>
            <person name="Wood V."/>
            <person name="Gwilliam R."/>
            <person name="Rajandream M.A."/>
            <person name="Lyne M.H."/>
            <person name="Lyne R."/>
            <person name="Stewart A."/>
            <person name="Sgouros J.G."/>
            <person name="Peat N."/>
            <person name="Hayles J."/>
            <person name="Baker S.G."/>
            <person name="Basham D."/>
            <person name="Bowman S."/>
            <person name="Brooks K."/>
            <person name="Brown D."/>
            <person name="Brown S."/>
            <person name="Chillingworth T."/>
            <person name="Churcher C.M."/>
            <person name="Collins M."/>
            <person name="Connor R."/>
            <person name="Cronin A."/>
            <person name="Davis P."/>
            <person name="Feltwell T."/>
            <person name="Fraser A."/>
            <person name="Gentles S."/>
            <person name="Goble A."/>
            <person name="Hamlin N."/>
            <person name="Harris D.E."/>
            <person name="Hidalgo J."/>
            <person name="Hodgson G."/>
            <person name="Holroyd S."/>
            <person name="Hornsby T."/>
            <person name="Howarth S."/>
            <person name="Huckle E.J."/>
            <person name="Hunt S."/>
            <person name="Jagels K."/>
            <person name="James K.D."/>
            <person name="Jones L."/>
            <person name="Jones M."/>
            <person name="Leather S."/>
            <person name="McDonald S."/>
            <person name="McLean J."/>
            <person name="Mooney P."/>
            <person name="Moule S."/>
            <person name="Mungall K.L."/>
            <person name="Murphy L.D."/>
            <person name="Niblett D."/>
            <person name="Odell C."/>
            <person name="Oliver K."/>
            <person name="O'Neil S."/>
            <person name="Pearson D."/>
            <person name="Quail M.A."/>
            <person name="Rabbinowitsch E."/>
            <person name="Rutherford K.M."/>
            <person name="Rutter S."/>
            <person name="Saunders D."/>
            <person name="Seeger K."/>
            <person name="Sharp S."/>
            <person name="Skelton J."/>
            <person name="Simmonds M.N."/>
            <person name="Squares R."/>
            <person name="Squares S."/>
            <person name="Stevens K."/>
            <person name="Taylor K."/>
            <person name="Taylor R.G."/>
            <person name="Tivey A."/>
            <person name="Walsh S.V."/>
            <person name="Warren T."/>
            <person name="Whitehead S."/>
            <person name="Woodward J.R."/>
            <person name="Volckaert G."/>
            <person name="Aert R."/>
            <person name="Robben J."/>
            <person name="Grymonprez B."/>
            <person name="Weltjens I."/>
            <person name="Vanstreels E."/>
            <person name="Rieger M."/>
            <person name="Schaefer M."/>
            <person name="Mueller-Auer S."/>
            <person name="Gabel C."/>
            <person name="Fuchs M."/>
            <person name="Duesterhoeft A."/>
            <person name="Fritzc C."/>
            <person name="Holzer E."/>
            <person name="Moestl D."/>
            <person name="Hilbert H."/>
            <person name="Borzym K."/>
            <person name="Langer I."/>
            <person name="Beck A."/>
            <person name="Lehrach H."/>
            <person name="Reinhardt R."/>
            <person name="Pohl T.M."/>
            <person name="Eger P."/>
            <person name="Zimmermann W."/>
            <person name="Wedler H."/>
            <person name="Wambutt R."/>
            <person name="Purnelle B."/>
            <person name="Goffeau A."/>
            <person name="Cadieu E."/>
            <person name="Dreano S."/>
            <person name="Gloux S."/>
            <person name="Lelaure V."/>
            <person name="Mottier S."/>
            <person name="Galibert F."/>
            <person name="Aves S.J."/>
            <person name="Xiang Z."/>
            <person name="Hunt C."/>
            <person name="Moore K."/>
            <person name="Hurst S.M."/>
            <person name="Lucas M."/>
            <person name="Rochet M."/>
            <person name="Gaillardin C."/>
            <person name="Tallada V.A."/>
            <person name="Garzon A."/>
            <person name="Thode G."/>
            <person name="Daga R.R."/>
            <person name="Cruzado L."/>
            <person name="Jimenez J."/>
            <person name="Sanchez M."/>
            <person name="del Rey F."/>
            <person name="Benito J."/>
            <person name="Dominguez A."/>
            <person name="Revuelta J.L."/>
            <person name="Moreno S."/>
            <person name="Armstrong J."/>
            <person name="Forsburg S.L."/>
            <person name="Cerutti L."/>
            <person name="Lowe T."/>
            <person name="McCombie W.R."/>
            <person name="Paulsen I."/>
            <person name="Potashkin J."/>
            <person name="Shpakovski G.V."/>
            <person name="Ussery D."/>
            <person name="Barrell B.G."/>
            <person name="Nurse P."/>
        </authorList>
    </citation>
    <scope>NUCLEOTIDE SEQUENCE [LARGE SCALE GENOMIC DNA]</scope>
    <source>
        <strain>972 / ATCC 24843</strain>
    </source>
</reference>
<reference evidence="5" key="2">
    <citation type="journal article" date="2006" name="Nat. Biotechnol.">
        <title>ORFeome cloning and global analysis of protein localization in the fission yeast Schizosaccharomyces pombe.</title>
        <authorList>
            <person name="Matsuyama A."/>
            <person name="Arai R."/>
            <person name="Yashiroda Y."/>
            <person name="Shirai A."/>
            <person name="Kamata A."/>
            <person name="Sekido S."/>
            <person name="Kobayashi Y."/>
            <person name="Hashimoto A."/>
            <person name="Hamamoto M."/>
            <person name="Hiraoka Y."/>
            <person name="Horinouchi S."/>
            <person name="Yoshida M."/>
        </authorList>
    </citation>
    <scope>SUBCELLULAR LOCATION [LARGE SCALE ANALYSIS]</scope>
</reference>
<feature type="chain" id="PRO_0000312835" description="GTPase-activating protein gyp1">
    <location>
        <begin position="1"/>
        <end position="514"/>
    </location>
</feature>
<feature type="domain" description="Rab-GAP TBC" evidence="2">
    <location>
        <begin position="216"/>
        <end position="443"/>
    </location>
</feature>
<feature type="region of interest" description="Disordered" evidence="3">
    <location>
        <begin position="17"/>
        <end position="65"/>
    </location>
</feature>
<feature type="region of interest" description="Disordered" evidence="3">
    <location>
        <begin position="130"/>
        <end position="164"/>
    </location>
</feature>
<feature type="compositionally biased region" description="Polar residues" evidence="3">
    <location>
        <begin position="18"/>
        <end position="28"/>
    </location>
</feature>
<feature type="compositionally biased region" description="Polar residues" evidence="3">
    <location>
        <begin position="135"/>
        <end position="158"/>
    </location>
</feature>
<keyword id="KW-0963">Cytoplasm</keyword>
<keyword id="KW-0333">Golgi apparatus</keyword>
<keyword id="KW-0343">GTPase activation</keyword>
<keyword id="KW-0539">Nucleus</keyword>
<keyword id="KW-1185">Reference proteome</keyword>
<sequence>MESQSKKSSALKTLSSLWNGSSSATSDPVTVLDRSRTHHHRGRSTSSKAQPFRLDDSVYSDQPPKDHISLARSITRPESASESKIYAPSARSSLSLEAVVGKKVSAKFAKYLSQTDDDWGVSNIKASKSLPRMARSTTPNSSSRSLFPQNGVDTTTSRQKLHSSGRFPLPAKLAHRSVEVEVAESNALVSRIKKFSRILDAPIVDLNALRTLAWNGIPSEHRPIVWKYLLGYLPCNASRREVTLKRKRDEYNAAKDSCFNTNTEPPPLDQTIWRQIVLDVPRTNPSILLYQNPLTQRMLERILYVWASRHPASGYVQGISDLVTPFIQVFLSEYIGDKDPMTYDIALLDETNRNDIEADAYWCLSKLLDGIQDNYIHAQPGIRRQVNNLRELTLRIDEPLVKHLQMEGVDFLQFSFRWMNCLLMRELSISNIIRMWDTYMAEGVQGFSEFHLYVCAAFLVKWSSELQKMEFQDILIFLQSIPTKDWSTKDIEILLSEAFLWKSLYSGAGAHLKR</sequence>
<gene>
    <name evidence="6" type="primary">gyp1</name>
    <name type="ORF">SPBC530.01</name>
</gene>
<comment type="function">
    <text evidence="1">Stimulates specifically the GTPase activity of ypt1. Functions on the Golgi as a negative regulator of ypt1 (By similarity).</text>
</comment>
<comment type="subcellular location">
    <subcellularLocation>
        <location evidence="1">Golgi apparatus</location>
        <location evidence="1">Golgi stack</location>
    </subcellularLocation>
    <subcellularLocation>
        <location evidence="4">Cytoplasm</location>
    </subcellularLocation>
    <subcellularLocation>
        <location evidence="4">Nucleus</location>
    </subcellularLocation>
</comment>
<organism>
    <name type="scientific">Schizosaccharomyces pombe (strain 972 / ATCC 24843)</name>
    <name type="common">Fission yeast</name>
    <dbReference type="NCBI Taxonomy" id="284812"/>
    <lineage>
        <taxon>Eukaryota</taxon>
        <taxon>Fungi</taxon>
        <taxon>Dikarya</taxon>
        <taxon>Ascomycota</taxon>
        <taxon>Taphrinomycotina</taxon>
        <taxon>Schizosaccharomycetes</taxon>
        <taxon>Schizosaccharomycetales</taxon>
        <taxon>Schizosaccharomycetaceae</taxon>
        <taxon>Schizosaccharomyces</taxon>
    </lineage>
</organism>
<evidence type="ECO:0000250" key="1">
    <source>
        <dbReference type="UniProtKB" id="Q08484"/>
    </source>
</evidence>
<evidence type="ECO:0000255" key="2">
    <source>
        <dbReference type="PROSITE-ProRule" id="PRU00163"/>
    </source>
</evidence>
<evidence type="ECO:0000256" key="3">
    <source>
        <dbReference type="SAM" id="MobiDB-lite"/>
    </source>
</evidence>
<evidence type="ECO:0000269" key="4">
    <source>
    </source>
</evidence>
<evidence type="ECO:0000305" key="5"/>
<evidence type="ECO:0000312" key="6">
    <source>
        <dbReference type="EMBL" id="CAA19167.1"/>
    </source>
</evidence>
<accession>O59737</accession>
<protein>
    <recommendedName>
        <fullName>GTPase-activating protein gyp1</fullName>
    </recommendedName>
    <alternativeName>
        <fullName>GAP for ypt1</fullName>
    </alternativeName>
</protein>
<dbReference type="EMBL" id="CU329671">
    <property type="protein sequence ID" value="CAA19167.1"/>
    <property type="molecule type" value="Genomic_DNA"/>
</dbReference>
<dbReference type="PIR" id="T40517">
    <property type="entry name" value="T40517"/>
</dbReference>
<dbReference type="RefSeq" id="NP_595314.1">
    <property type="nucleotide sequence ID" value="NM_001021221.2"/>
</dbReference>
<dbReference type="SMR" id="O59737"/>
<dbReference type="BioGRID" id="277408">
    <property type="interactions" value="67"/>
</dbReference>
<dbReference type="FunCoup" id="O59737">
    <property type="interactions" value="713"/>
</dbReference>
<dbReference type="STRING" id="284812.O59737"/>
<dbReference type="iPTMnet" id="O59737"/>
<dbReference type="PaxDb" id="4896-SPBC530.01.1"/>
<dbReference type="EnsemblFungi" id="SPBC530.01.1">
    <property type="protein sequence ID" value="SPBC530.01.1:pep"/>
    <property type="gene ID" value="SPBC530.01"/>
</dbReference>
<dbReference type="GeneID" id="2540892"/>
<dbReference type="KEGG" id="spo:2540892"/>
<dbReference type="PomBase" id="SPBC530.01">
    <property type="gene designation" value="gyp1"/>
</dbReference>
<dbReference type="VEuPathDB" id="FungiDB:SPBC530.01"/>
<dbReference type="eggNOG" id="KOG1092">
    <property type="taxonomic scope" value="Eukaryota"/>
</dbReference>
<dbReference type="HOGENOM" id="CLU_018687_4_1_1"/>
<dbReference type="InParanoid" id="O59737"/>
<dbReference type="OMA" id="SCYNIFN"/>
<dbReference type="PhylomeDB" id="O59737"/>
<dbReference type="PRO" id="PR:O59737"/>
<dbReference type="Proteomes" id="UP000002485">
    <property type="component" value="Chromosome II"/>
</dbReference>
<dbReference type="GO" id="GO:0005737">
    <property type="term" value="C:cytoplasm"/>
    <property type="evidence" value="ECO:0007005"/>
    <property type="project" value="PomBase"/>
</dbReference>
<dbReference type="GO" id="GO:0005829">
    <property type="term" value="C:cytosol"/>
    <property type="evidence" value="ECO:0007005"/>
    <property type="project" value="PomBase"/>
</dbReference>
<dbReference type="GO" id="GO:0005794">
    <property type="term" value="C:Golgi apparatus"/>
    <property type="evidence" value="ECO:0000318"/>
    <property type="project" value="GO_Central"/>
</dbReference>
<dbReference type="GO" id="GO:0005795">
    <property type="term" value="C:Golgi stack"/>
    <property type="evidence" value="ECO:0007669"/>
    <property type="project" value="UniProtKB-SubCell"/>
</dbReference>
<dbReference type="GO" id="GO:0005634">
    <property type="term" value="C:nucleus"/>
    <property type="evidence" value="ECO:0007005"/>
    <property type="project" value="PomBase"/>
</dbReference>
<dbReference type="GO" id="GO:0005096">
    <property type="term" value="F:GTPase activator activity"/>
    <property type="evidence" value="ECO:0000318"/>
    <property type="project" value="GO_Central"/>
</dbReference>
<dbReference type="GO" id="GO:0016192">
    <property type="term" value="P:vesicle-mediated transport"/>
    <property type="evidence" value="ECO:0000303"/>
    <property type="project" value="PomBase"/>
</dbReference>
<dbReference type="FunFam" id="1.10.10.750:FF:000007">
    <property type="entry name" value="TBC1 domain family member"/>
    <property type="match status" value="1"/>
</dbReference>
<dbReference type="FunFam" id="1.10.472.80:FF:000001">
    <property type="entry name" value="TBC1 domain family member 22B"/>
    <property type="match status" value="1"/>
</dbReference>
<dbReference type="FunFam" id="1.10.8.270:FF:000004">
    <property type="entry name" value="TBC1 domain family, member 22B"/>
    <property type="match status" value="1"/>
</dbReference>
<dbReference type="Gene3D" id="1.10.8.270">
    <property type="entry name" value="putative rabgap domain of human tbc1 domain family member 14 like domains"/>
    <property type="match status" value="1"/>
</dbReference>
<dbReference type="Gene3D" id="1.10.10.750">
    <property type="entry name" value="Ypt/Rab-GAP domain of gyp1p, domain 1"/>
    <property type="match status" value="1"/>
</dbReference>
<dbReference type="Gene3D" id="1.10.472.80">
    <property type="entry name" value="Ypt/Rab-GAP domain of gyp1p, domain 3"/>
    <property type="match status" value="1"/>
</dbReference>
<dbReference type="InterPro" id="IPR000195">
    <property type="entry name" value="Rab-GAP-TBC_dom"/>
</dbReference>
<dbReference type="InterPro" id="IPR035969">
    <property type="entry name" value="Rab-GAP_TBC_sf"/>
</dbReference>
<dbReference type="PANTHER" id="PTHR22957:SF26">
    <property type="entry name" value="LD44506P"/>
    <property type="match status" value="1"/>
</dbReference>
<dbReference type="PANTHER" id="PTHR22957">
    <property type="entry name" value="TBC1 DOMAIN FAMILY MEMBER GTPASE-ACTIVATING PROTEIN"/>
    <property type="match status" value="1"/>
</dbReference>
<dbReference type="Pfam" id="PF00566">
    <property type="entry name" value="RabGAP-TBC"/>
    <property type="match status" value="1"/>
</dbReference>
<dbReference type="SMART" id="SM00164">
    <property type="entry name" value="TBC"/>
    <property type="match status" value="1"/>
</dbReference>
<dbReference type="SUPFAM" id="SSF47923">
    <property type="entry name" value="Ypt/Rab-GAP domain of gyp1p"/>
    <property type="match status" value="2"/>
</dbReference>
<dbReference type="PROSITE" id="PS50086">
    <property type="entry name" value="TBC_RABGAP"/>
    <property type="match status" value="1"/>
</dbReference>
<proteinExistence type="inferred from homology"/>
<name>GYP1_SCHPO</name>